<sequence>MKFLFDYFPIICFFVAYKFWGIYIATAAAMVVSALQVAIYWIRFRRFEKFHVITLIFILLLGSFTLVFHNAIFIKWKPTIVYWIFAIVLFGSHFFGKHTLVHRMLKEKIELPAKTWSRLNLSWALFFLILGVLNLFVVYNFDTNTWVNFKLFGTLALMLVFILGQAFYIARHAQNLKTNSR</sequence>
<accession>A9KG14</accession>
<keyword id="KW-0997">Cell inner membrane</keyword>
<keyword id="KW-1003">Cell membrane</keyword>
<keyword id="KW-0472">Membrane</keyword>
<keyword id="KW-0812">Transmembrane</keyword>
<keyword id="KW-1133">Transmembrane helix</keyword>
<protein>
    <recommendedName>
        <fullName evidence="1">Inner membrane-spanning protein YciB</fullName>
    </recommendedName>
</protein>
<gene>
    <name evidence="1" type="primary">yciB</name>
    <name type="ordered locus">CBUD_0975</name>
</gene>
<evidence type="ECO:0000255" key="1">
    <source>
        <dbReference type="HAMAP-Rule" id="MF_00189"/>
    </source>
</evidence>
<feature type="chain" id="PRO_1000077485" description="Inner membrane-spanning protein YciB">
    <location>
        <begin position="1"/>
        <end position="181"/>
    </location>
</feature>
<feature type="transmembrane region" description="Helical" evidence="1">
    <location>
        <begin position="8"/>
        <end position="28"/>
    </location>
</feature>
<feature type="transmembrane region" description="Helical" evidence="1">
    <location>
        <begin position="53"/>
        <end position="73"/>
    </location>
</feature>
<feature type="transmembrane region" description="Helical" evidence="1">
    <location>
        <begin position="76"/>
        <end position="96"/>
    </location>
</feature>
<feature type="transmembrane region" description="Helical" evidence="1">
    <location>
        <begin position="121"/>
        <end position="141"/>
    </location>
</feature>
<feature type="transmembrane region" description="Helical" evidence="1">
    <location>
        <begin position="149"/>
        <end position="169"/>
    </location>
</feature>
<dbReference type="EMBL" id="CP000733">
    <property type="protein sequence ID" value="ABS78241.1"/>
    <property type="molecule type" value="Genomic_DNA"/>
</dbReference>
<dbReference type="RefSeq" id="WP_005768731.1">
    <property type="nucleotide sequence ID" value="NC_009727.1"/>
</dbReference>
<dbReference type="SMR" id="A9KG14"/>
<dbReference type="KEGG" id="cbd:CBUD_0975"/>
<dbReference type="HOGENOM" id="CLU_089554_2_0_6"/>
<dbReference type="Proteomes" id="UP000008555">
    <property type="component" value="Chromosome"/>
</dbReference>
<dbReference type="GO" id="GO:0005886">
    <property type="term" value="C:plasma membrane"/>
    <property type="evidence" value="ECO:0007669"/>
    <property type="project" value="UniProtKB-SubCell"/>
</dbReference>
<dbReference type="HAMAP" id="MF_00189">
    <property type="entry name" value="YciB"/>
    <property type="match status" value="1"/>
</dbReference>
<dbReference type="InterPro" id="IPR006008">
    <property type="entry name" value="YciB"/>
</dbReference>
<dbReference type="NCBIfam" id="TIGR00997">
    <property type="entry name" value="ispZ"/>
    <property type="match status" value="1"/>
</dbReference>
<dbReference type="NCBIfam" id="NF001325">
    <property type="entry name" value="PRK00259.1-3"/>
    <property type="match status" value="1"/>
</dbReference>
<dbReference type="PANTHER" id="PTHR36917:SF1">
    <property type="entry name" value="INNER MEMBRANE-SPANNING PROTEIN YCIB"/>
    <property type="match status" value="1"/>
</dbReference>
<dbReference type="PANTHER" id="PTHR36917">
    <property type="entry name" value="INTRACELLULAR SEPTATION PROTEIN A-RELATED"/>
    <property type="match status" value="1"/>
</dbReference>
<dbReference type="Pfam" id="PF04279">
    <property type="entry name" value="IspA"/>
    <property type="match status" value="1"/>
</dbReference>
<name>YCIB_COXBN</name>
<organism>
    <name type="scientific">Coxiella burnetii (strain Dugway 5J108-111)</name>
    <dbReference type="NCBI Taxonomy" id="434922"/>
    <lineage>
        <taxon>Bacteria</taxon>
        <taxon>Pseudomonadati</taxon>
        <taxon>Pseudomonadota</taxon>
        <taxon>Gammaproteobacteria</taxon>
        <taxon>Legionellales</taxon>
        <taxon>Coxiellaceae</taxon>
        <taxon>Coxiella</taxon>
    </lineage>
</organism>
<proteinExistence type="inferred from homology"/>
<reference key="1">
    <citation type="journal article" date="2009" name="Infect. Immun.">
        <title>Comparative genomics reveal extensive transposon-mediated genomic plasticity and diversity among potential effector proteins within the genus Coxiella.</title>
        <authorList>
            <person name="Beare P.A."/>
            <person name="Unsworth N."/>
            <person name="Andoh M."/>
            <person name="Voth D.E."/>
            <person name="Omsland A."/>
            <person name="Gilk S.D."/>
            <person name="Williams K.P."/>
            <person name="Sobral B.W."/>
            <person name="Kupko J.J. III"/>
            <person name="Porcella S.F."/>
            <person name="Samuel J.E."/>
            <person name="Heinzen R.A."/>
        </authorList>
    </citation>
    <scope>NUCLEOTIDE SEQUENCE [LARGE SCALE GENOMIC DNA]</scope>
    <source>
        <strain>Dugway 5J108-111</strain>
    </source>
</reference>
<comment type="function">
    <text evidence="1">Plays a role in cell envelope biogenesis, maintenance of cell envelope integrity and membrane homeostasis.</text>
</comment>
<comment type="subcellular location">
    <subcellularLocation>
        <location evidence="1">Cell inner membrane</location>
        <topology evidence="1">Multi-pass membrane protein</topology>
    </subcellularLocation>
</comment>
<comment type="similarity">
    <text evidence="1">Belongs to the YciB family.</text>
</comment>